<sequence>MSPEIALNRISPMLSPFISSVVRNGKVGLDATNCLRITDLKSGCTSLTPGPNCDRFKLHIPYAGETLKWDIIFNAQYPELPPDFIFGEDAEFLPDPSALHNLASWNPSNPECLLLVVKELVQQYHQFQCGRLRESSRLMFEYQTLLEEPQYGENMEIYAGKKNNWTGEFSARFLLKLPVDFSNIPTYLLKDVNEDPGEDVALLSVSFEDTEATQVYPKLYLSPRIEHALGGSSALHIPAFPGGGCLIDYVPQVCHLLTNKVQYVIQGYHKRREYIAAFLSHFGTGVVEYDAEGFTKLTLLLMWKEFCFLVHIDLPLFFPRDQPTLTFQSVYHFTNSGQLYSQAQKNYPYSPRWDGNEMAKRAKAYFKTFVPQFQEAAFANGKL</sequence>
<organism>
    <name type="scientific">Rattus norvegicus</name>
    <name type="common">Rat</name>
    <dbReference type="NCBI Taxonomy" id="10116"/>
    <lineage>
        <taxon>Eukaryota</taxon>
        <taxon>Metazoa</taxon>
        <taxon>Chordata</taxon>
        <taxon>Craniata</taxon>
        <taxon>Vertebrata</taxon>
        <taxon>Euteleostomi</taxon>
        <taxon>Mammalia</taxon>
        <taxon>Eutheria</taxon>
        <taxon>Euarchontoglires</taxon>
        <taxon>Glires</taxon>
        <taxon>Rodentia</taxon>
        <taxon>Myomorpha</taxon>
        <taxon>Muroidea</taxon>
        <taxon>Muridae</taxon>
        <taxon>Murinae</taxon>
        <taxon>Rattus</taxon>
    </lineage>
</organism>
<gene>
    <name evidence="3" type="primary">Babam2</name>
    <name type="synonym">Bre</name>
</gene>
<accession>Q6P7Q1</accession>
<comment type="function">
    <text evidence="1">Component of the BRCA1-A complex, a complex that specifically recognizes 'Lys-63'-linked ubiquitinated histones H2A and H2AX at DNA lesions sites, leading to target the BRCA1-BARD1 heterodimer to sites of DNA damage at double-strand breaks (DSBs). The BRCA1-A complex also possesses deubiquitinase activity that specifically removes 'Lys-63'-linked ubiquitin on histones H2A and H2AX. In the BRCA1-A complex, it acts as an adapter that bridges the interaction between BABAM1/NBA1 and the rest of the complex, thereby being required for the complex integrity and modulating the E3 ubiquitin ligase activity of the BRCA1-BARD1 heterodimer. Component of the BRISC complex, a multiprotein complex that specifically cleaves 'Lys-63'-linked ubiquitin in various substrates. Within the BRISC complex, acts as an adapter that bridges the interaction between BABAM1/NBA1 and the rest of the complex, thereby being required for the complex integrity. The BRISC complex is required for normal mitotic spindle assembly and microtubule attachment to kinetochores via its role in deubiquitinating NUMA1. The BRISC complex plays a role in interferon signaling via its role in the deubiquitination of the interferon receptor IFNAR1; deubiquitination increases IFNAR1 activity by enhancing its stability and cell surface expression. Down-regulates the response to bacterial lipopolysaccharide (LPS) via its role in IFNAR1 deubiquitination. May play a role in homeostasis or cellular differentiation in cells of neural, epithelial and germline origins. May also act as a death receptor-associated anti-apoptotic protein, which inhibits the mitochondrial apoptotic pathway. May regulate TNF-alpha signaling through its interactions with TNFRSF1A; however these effects may be indirect.</text>
</comment>
<comment type="subunit">
    <text evidence="1">Component of the ARISC complex, at least composed of UIMC1/RAP80, ABRAXAS1, BRCC3/BRCC36, BABAM2 and BABAM1/NBA1. Component of the BRCA1-A complex, at least composed of BRCA1, BARD1, UIMC1/RAP80, ABRAXAS1, BRCC3/BRCC36, BABAM2 and BABAM1/NBA1. In the BRCA1-A complex, interacts directly with ABRAXAS1, BRCC3/BRCC36 and BABAM1/NBA1. Binds polyubiquitin. Component of the BRISC complex, at least composed of ABRAXAS2, BRCC3/BRCC36, BABAM2 and BABAM1/NBA1. Identified in a complex with SHMT2 and the other subunits of the BRISC complex. Component of the BRCA1/BRCA2 containing complex (BRCC), which also contains BRCA1, BRCA2, BARD1, BRCC3/BRCC36 and RAD51. BRCC is a ubiquitin E3 ligase complex that enhances cellular survival following DNA damage. May interact with FAS and TNFRSF1A.</text>
</comment>
<comment type="subcellular location">
    <subcellularLocation>
        <location evidence="1">Cytoplasm</location>
    </subcellularLocation>
    <subcellularLocation>
        <location evidence="1">Nucleus</location>
    </subcellularLocation>
    <text evidence="1">Localizes at sites of DNA damage at double-strand breaks (DSBs).</text>
</comment>
<comment type="domain">
    <text evidence="1">Contains 2 ubiquitin-conjugating enzyme family-like (UEV-like) regions. These regions lack the critical Cys residues required for ubiquitination but retain the ability to bind ubiquitin.</text>
</comment>
<comment type="similarity">
    <text evidence="2">Belongs to the BABAM2 family.</text>
</comment>
<reference key="1">
    <citation type="journal article" date="2004" name="Genome Res.">
        <title>The status, quality, and expansion of the NIH full-length cDNA project: the Mammalian Gene Collection (MGC).</title>
        <authorList>
            <consortium name="The MGC Project Team"/>
        </authorList>
    </citation>
    <scope>NUCLEOTIDE SEQUENCE [LARGE SCALE MRNA]</scope>
    <source>
        <tissue>Pituitary</tissue>
    </source>
</reference>
<reference key="2">
    <citation type="journal article" date="2012" name="Nat. Commun.">
        <title>Quantitative maps of protein phosphorylation sites across 14 different rat organs and tissues.</title>
        <authorList>
            <person name="Lundby A."/>
            <person name="Secher A."/>
            <person name="Lage K."/>
            <person name="Nordsborg N.B."/>
            <person name="Dmytriyev A."/>
            <person name="Lundby C."/>
            <person name="Olsen J.V."/>
        </authorList>
    </citation>
    <scope>PHOSPHORYLATION [LARGE SCALE ANALYSIS] AT SER-2</scope>
    <scope>IDENTIFICATION BY MASS SPECTROMETRY [LARGE SCALE ANALYSIS]</scope>
</reference>
<protein>
    <recommendedName>
        <fullName>BRISC and BRCA1-A complex member 2</fullName>
    </recommendedName>
    <alternativeName>
        <fullName>BRCA1-A complex subunit BRE</fullName>
    </alternativeName>
    <alternativeName>
        <fullName>BRCA1/BRCA2-containing complex subunit 45</fullName>
    </alternativeName>
    <alternativeName>
        <fullName>Brain and reproductive organ-expressed protein</fullName>
    </alternativeName>
</protein>
<feature type="chain" id="PRO_0000224191" description="BRISC and BRCA1-A complex member 2">
    <location>
        <begin position="1"/>
        <end position="383"/>
    </location>
</feature>
<feature type="region of interest" description="UEV-like 1">
    <location>
        <begin position="30"/>
        <end position="147"/>
    </location>
</feature>
<feature type="region of interest" description="UEV-like 2">
    <location>
        <begin position="275"/>
        <end position="364"/>
    </location>
</feature>
<feature type="modified residue" description="N-acetylmethionine" evidence="1">
    <location>
        <position position="1"/>
    </location>
</feature>
<feature type="modified residue" description="Phosphoserine" evidence="4">
    <location>
        <position position="2"/>
    </location>
</feature>
<name>BABA2_RAT</name>
<proteinExistence type="evidence at protein level"/>
<keyword id="KW-0007">Acetylation</keyword>
<keyword id="KW-0053">Apoptosis</keyword>
<keyword id="KW-0131">Cell cycle</keyword>
<keyword id="KW-0132">Cell division</keyword>
<keyword id="KW-0156">Chromatin regulator</keyword>
<keyword id="KW-0963">Cytoplasm</keyword>
<keyword id="KW-0227">DNA damage</keyword>
<keyword id="KW-0234">DNA repair</keyword>
<keyword id="KW-0498">Mitosis</keyword>
<keyword id="KW-0539">Nucleus</keyword>
<keyword id="KW-0597">Phosphoprotein</keyword>
<keyword id="KW-1185">Reference proteome</keyword>
<keyword id="KW-0677">Repeat</keyword>
<keyword id="KW-0833">Ubl conjugation pathway</keyword>
<dbReference type="EMBL" id="BC061573">
    <property type="protein sequence ID" value="AAH61573.1"/>
    <property type="molecule type" value="mRNA"/>
</dbReference>
<dbReference type="RefSeq" id="NP_954891.1">
    <property type="nucleotide sequence ID" value="NM_199270.2"/>
</dbReference>
<dbReference type="RefSeq" id="XP_006239864.1">
    <property type="nucleotide sequence ID" value="XM_006239802.4"/>
</dbReference>
<dbReference type="RefSeq" id="XP_017449703.1">
    <property type="nucleotide sequence ID" value="XM_017594214.1"/>
</dbReference>
<dbReference type="RefSeq" id="XP_038968389.1">
    <property type="nucleotide sequence ID" value="XM_039112461.2"/>
</dbReference>
<dbReference type="SMR" id="Q6P7Q1"/>
<dbReference type="FunCoup" id="Q6P7Q1">
    <property type="interactions" value="1688"/>
</dbReference>
<dbReference type="IntAct" id="Q6P7Q1">
    <property type="interactions" value="1"/>
</dbReference>
<dbReference type="STRING" id="10116.ENSRNOP00000005855"/>
<dbReference type="iPTMnet" id="Q6P7Q1"/>
<dbReference type="PhosphoSitePlus" id="Q6P7Q1"/>
<dbReference type="jPOST" id="Q6P7Q1"/>
<dbReference type="PaxDb" id="10116-ENSRNOP00000005855"/>
<dbReference type="Ensembl" id="ENSRNOT00000005855.5">
    <property type="protein sequence ID" value="ENSRNOP00000005855.4"/>
    <property type="gene ID" value="ENSRNOG00000004364.5"/>
</dbReference>
<dbReference type="GeneID" id="362704"/>
<dbReference type="KEGG" id="rno:362704"/>
<dbReference type="AGR" id="RGD:735111"/>
<dbReference type="CTD" id="9577"/>
<dbReference type="RGD" id="735111">
    <property type="gene designation" value="Babam2"/>
</dbReference>
<dbReference type="eggNOG" id="ENOG502QUU0">
    <property type="taxonomic scope" value="Eukaryota"/>
</dbReference>
<dbReference type="GeneTree" id="ENSGT00390000004208"/>
<dbReference type="HOGENOM" id="CLU_057019_0_0_1"/>
<dbReference type="InParanoid" id="Q6P7Q1"/>
<dbReference type="PhylomeDB" id="Q6P7Q1"/>
<dbReference type="TreeFam" id="TF328507"/>
<dbReference type="Reactome" id="R-RNO-5689901">
    <property type="pathway name" value="Metalloprotease DUBs"/>
</dbReference>
<dbReference type="Reactome" id="R-RNO-5693565">
    <property type="pathway name" value="Recruitment and ATM-mediated phosphorylation of repair and signaling proteins at DNA double strand breaks"/>
</dbReference>
<dbReference type="Reactome" id="R-RNO-5693571">
    <property type="pathway name" value="Nonhomologous End-Joining (NHEJ)"/>
</dbReference>
<dbReference type="Reactome" id="R-RNO-5693607">
    <property type="pathway name" value="Processing of DNA double-strand break ends"/>
</dbReference>
<dbReference type="Reactome" id="R-RNO-69473">
    <property type="pathway name" value="G2/M DNA damage checkpoint"/>
</dbReference>
<dbReference type="PRO" id="PR:Q6P7Q1"/>
<dbReference type="Proteomes" id="UP000002494">
    <property type="component" value="Chromosome 6"/>
</dbReference>
<dbReference type="Bgee" id="ENSRNOG00000004364">
    <property type="expression patterns" value="Expressed in heart and 20 other cell types or tissues"/>
</dbReference>
<dbReference type="GO" id="GO:0070531">
    <property type="term" value="C:BRCA1-A complex"/>
    <property type="evidence" value="ECO:0000250"/>
    <property type="project" value="UniProtKB"/>
</dbReference>
<dbReference type="GO" id="GO:0070552">
    <property type="term" value="C:BRISC complex"/>
    <property type="evidence" value="ECO:0000250"/>
    <property type="project" value="UniProtKB"/>
</dbReference>
<dbReference type="GO" id="GO:0005737">
    <property type="term" value="C:cytoplasm"/>
    <property type="evidence" value="ECO:0000250"/>
    <property type="project" value="UniProtKB"/>
</dbReference>
<dbReference type="GO" id="GO:0000152">
    <property type="term" value="C:nuclear ubiquitin ligase complex"/>
    <property type="evidence" value="ECO:0000250"/>
    <property type="project" value="UniProtKB"/>
</dbReference>
<dbReference type="GO" id="GO:0005634">
    <property type="term" value="C:nucleus"/>
    <property type="evidence" value="ECO:0000250"/>
    <property type="project" value="UniProtKB"/>
</dbReference>
<dbReference type="GO" id="GO:0031593">
    <property type="term" value="F:polyubiquitin modification-dependent protein binding"/>
    <property type="evidence" value="ECO:0000250"/>
    <property type="project" value="UniProtKB"/>
</dbReference>
<dbReference type="GO" id="GO:0005164">
    <property type="term" value="F:tumor necrosis factor receptor binding"/>
    <property type="evidence" value="ECO:0000250"/>
    <property type="project" value="UniProtKB"/>
</dbReference>
<dbReference type="GO" id="GO:0006915">
    <property type="term" value="P:apoptotic process"/>
    <property type="evidence" value="ECO:0007669"/>
    <property type="project" value="UniProtKB-KW"/>
</dbReference>
<dbReference type="GO" id="GO:0051301">
    <property type="term" value="P:cell division"/>
    <property type="evidence" value="ECO:0007669"/>
    <property type="project" value="UniProtKB-KW"/>
</dbReference>
<dbReference type="GO" id="GO:0071479">
    <property type="term" value="P:cellular response to ionizing radiation"/>
    <property type="evidence" value="ECO:0000266"/>
    <property type="project" value="RGD"/>
</dbReference>
<dbReference type="GO" id="GO:0006325">
    <property type="term" value="P:chromatin organization"/>
    <property type="evidence" value="ECO:0007669"/>
    <property type="project" value="UniProtKB-KW"/>
</dbReference>
<dbReference type="GO" id="GO:0006974">
    <property type="term" value="P:DNA damage response"/>
    <property type="evidence" value="ECO:0000250"/>
    <property type="project" value="UniProtKB"/>
</dbReference>
<dbReference type="GO" id="GO:0006302">
    <property type="term" value="P:double-strand break repair"/>
    <property type="evidence" value="ECO:0000250"/>
    <property type="project" value="UniProtKB"/>
</dbReference>
<dbReference type="GO" id="GO:0007095">
    <property type="term" value="P:mitotic G2 DNA damage checkpoint signaling"/>
    <property type="evidence" value="ECO:0000250"/>
    <property type="project" value="UniProtKB"/>
</dbReference>
<dbReference type="GO" id="GO:0043066">
    <property type="term" value="P:negative regulation of apoptotic process"/>
    <property type="evidence" value="ECO:0000250"/>
    <property type="project" value="UniProtKB"/>
</dbReference>
<dbReference type="GO" id="GO:0045739">
    <property type="term" value="P:positive regulation of DNA repair"/>
    <property type="evidence" value="ECO:0000250"/>
    <property type="project" value="UniProtKB"/>
</dbReference>
<dbReference type="GO" id="GO:0010212">
    <property type="term" value="P:response to ionizing radiation"/>
    <property type="evidence" value="ECO:0000250"/>
    <property type="project" value="UniProtKB"/>
</dbReference>
<dbReference type="CDD" id="cd23664">
    <property type="entry name" value="BRE"/>
    <property type="match status" value="1"/>
</dbReference>
<dbReference type="InterPro" id="IPR010358">
    <property type="entry name" value="BRE"/>
</dbReference>
<dbReference type="PANTHER" id="PTHR15189">
    <property type="entry name" value="BRISC AND BRCA1-A COMPLEX MEMBER 2"/>
    <property type="match status" value="1"/>
</dbReference>
<dbReference type="PANTHER" id="PTHR15189:SF7">
    <property type="entry name" value="BRISC AND BRCA1-A COMPLEX MEMBER 2"/>
    <property type="match status" value="1"/>
</dbReference>
<dbReference type="Pfam" id="PF06113">
    <property type="entry name" value="BRE"/>
    <property type="match status" value="1"/>
</dbReference>
<evidence type="ECO:0000250" key="1">
    <source>
        <dbReference type="UniProtKB" id="Q9NXR7"/>
    </source>
</evidence>
<evidence type="ECO:0000255" key="2"/>
<evidence type="ECO:0000312" key="3">
    <source>
        <dbReference type="RGD" id="735111"/>
    </source>
</evidence>
<evidence type="ECO:0007744" key="4">
    <source>
    </source>
</evidence>